<comment type="function">
    <text evidence="3">Catalyzes the transfer of a lysyl group from L-lysyl-tRNA(Lys) to membrane-bound phosphatidylglycerol (PG), which produces lysylphosphatidylglycerol (LPG), one of the components of the bacterial membrane with a positive net charge. LPG synthesis contributes to the resistance to cationic antimicrobial peptides (CAMPs) and likely protects B.subtilis against its own CAMPs and against those produced by competiting microorganisms (bacteriocins). In fact, the modification of anionic phosphatidylglycerol with positively charged L-lysine results in repulsion of the peptides.</text>
</comment>
<comment type="catalytic activity">
    <reaction>
        <text>L-lysyl-tRNA(Lys) + a 1,2-diacyl-sn-glycero-3-phospho-(1'-sn-glycerol) = a 1,2-diacyl-sn-glycero-3-phospho-1'-(3'-O-L-lysyl)-sn-glycerol + tRNA(Lys)</text>
        <dbReference type="Rhea" id="RHEA:10668"/>
        <dbReference type="Rhea" id="RHEA-COMP:9696"/>
        <dbReference type="Rhea" id="RHEA-COMP:9697"/>
        <dbReference type="ChEBI" id="CHEBI:64716"/>
        <dbReference type="ChEBI" id="CHEBI:75792"/>
        <dbReference type="ChEBI" id="CHEBI:78442"/>
        <dbReference type="ChEBI" id="CHEBI:78529"/>
        <dbReference type="EC" id="2.3.2.3"/>
    </reaction>
</comment>
<comment type="subcellular location">
    <subcellularLocation>
        <location evidence="6">Cell membrane</location>
        <topology evidence="6">Multi-pass membrane protein</topology>
    </subcellularLocation>
    <text evidence="2">Localized in the septal membrane.</text>
</comment>
<comment type="disruption phenotype">
    <text evidence="3 4 5">Cells lacking this gene lack lysyl-phosphatidylglycerol in their membranes. They also display an increased sensitivity to the antibiotics nisin and daptomycin (PubMed:18820022, PubMed:19164152). Cells appear normal, no effect on flotillin cluster numbers or size (PubMed:27362352).</text>
</comment>
<comment type="similarity">
    <text evidence="6">Belongs to the LPG synthase family.</text>
</comment>
<comment type="sequence caution" evidence="6">
    <conflict type="frameshift">
        <sequence resource="EMBL-CDS" id="BAA24463"/>
    </conflict>
    <text>Produces two separate ORFs.</text>
</comment>
<comment type="sequence caution" evidence="6">
    <conflict type="erroneous initiation">
        <sequence resource="EMBL-CDS" id="BAA24464"/>
    </conflict>
    <text>Truncated N-terminus.</text>
</comment>
<comment type="sequence caution" evidence="6">
    <conflict type="frameshift">
        <sequence resource="EMBL-CDS" id="BAA24464"/>
    </conflict>
    <text>Produces two separate ORFs.</text>
</comment>
<protein>
    <recommendedName>
        <fullName>Phosphatidylglycerol lysyltransferase</fullName>
        <ecNumber>2.3.2.3</ecNumber>
    </recommendedName>
    <alternativeName>
        <fullName>Lysylphosphatidylglycerol synthase</fullName>
        <shortName>LPG synthase</shortName>
    </alternativeName>
</protein>
<organism>
    <name type="scientific">Bacillus subtilis (strain 168)</name>
    <dbReference type="NCBI Taxonomy" id="224308"/>
    <lineage>
        <taxon>Bacteria</taxon>
        <taxon>Bacillati</taxon>
        <taxon>Bacillota</taxon>
        <taxon>Bacilli</taxon>
        <taxon>Bacillales</taxon>
        <taxon>Bacillaceae</taxon>
        <taxon>Bacillus</taxon>
    </lineage>
</organism>
<gene>
    <name type="primary">mprF</name>
    <name type="synonym">yfiW</name>
    <name type="synonym">yfiX</name>
    <name type="ordered locus">BSU08425</name>
    <name type="ORF">BSU08420</name>
    <name type="ORF">BSU08430</name>
</gene>
<evidence type="ECO:0000255" key="1"/>
<evidence type="ECO:0000269" key="2">
    <source>
    </source>
</evidence>
<evidence type="ECO:0000269" key="3">
    <source>
    </source>
</evidence>
<evidence type="ECO:0000269" key="4">
    <source>
    </source>
</evidence>
<evidence type="ECO:0000269" key="5">
    <source>
    </source>
</evidence>
<evidence type="ECO:0000305" key="6"/>
<sequence length="856" mass="96322">MLIKKNALSILKIVFPIAVLLFVIYQSKKELTNLSFKRTLMVINGLERTDLFMLVLIGLLAVAAMSLYDYVLKYSLRLSITNGKVFRVSWIANSFNNVLGFGGLAGVGLRMMFYKEHTKDHKALVKGIAWLTSSMLLGLSVFSIFVAARVLPVDEVIHEKPWLWAVVIGFALILPLSLAVSKIKDRKAGDEENADKVKNPIFAYIGASVVEWLMAGTVIYFALFAMGIHADIRYVFGVFVIAAIGGMISLVPGGFGSFDLLFLLGMEQLGYHQEAIVTSIVLYRLAYSFIPFILGLFFAAGDLTENTMKRLETNPRIAPAIETTNVLLVVQRAVLVRILQGSLSLIVFVAGLIVLASVSLPIDRLTVIPHIPRPALLLFNGLSLSSALILLILPIELYKRTKRSYTMAITALVGGFVFSFLKGLNISAIFVLPMIIVLLVLLKKQFVREQASYTLGQLIFAVALFTVALFNYNLIAGFIWDRMKKVLRHEYFVHSTSHITHATIMAIIIVPLFFLIFTVVYHKRTKPIGEKADPERLAAFLNEKGGNALSHLGFLGDKRFYFSSDGNALLLFGKIARRLVVLGDPSGQRESFPLVLEEFLNEAHQKGFSVLFYQIEREDMALYHDFGYNFFKLGEEAYVDLNTFTLTGKKKAGLRAINNRFEREEYTFHVDHPPFSDAFLEELKQISDEWLGSKKEKGFSLGFFDPSYLQKAPIAYMKNAEGEIVAFANVMPMYQEGEISVDLMRYRGDAPNGIMDALFIRMFLWAKEEGCTSFNMGMAPLANVGTAFTSFWSERFAAVIFNNVRYMYSFSGLRAFKEKYKPEWRGKYLAYRKNRSLSVTMFLVTRLIGKSKKDSV</sequence>
<dbReference type="EC" id="2.3.2.3"/>
<dbReference type="EMBL" id="D85082">
    <property type="protein sequence ID" value="BAA24463.1"/>
    <property type="status" value="ALT_FRAME"/>
    <property type="molecule type" value="Genomic_DNA"/>
</dbReference>
<dbReference type="EMBL" id="D85082">
    <property type="protein sequence ID" value="BAA24464.1"/>
    <property type="status" value="ALT_FRAME"/>
    <property type="molecule type" value="Genomic_DNA"/>
</dbReference>
<dbReference type="EMBL" id="AL009126">
    <property type="protein sequence ID" value="CAX52582.1"/>
    <property type="molecule type" value="Genomic_DNA"/>
</dbReference>
<dbReference type="PIR" id="A69805">
    <property type="entry name" value="A69805"/>
</dbReference>
<dbReference type="RefSeq" id="WP_003242495.1">
    <property type="nucleotide sequence ID" value="NZ_OZ025638.1"/>
</dbReference>
<dbReference type="RefSeq" id="YP_003097695.1">
    <property type="nucleotide sequence ID" value="NC_000964.3"/>
</dbReference>
<dbReference type="SMR" id="C0H3X7"/>
<dbReference type="FunCoup" id="C0H3X7">
    <property type="interactions" value="188"/>
</dbReference>
<dbReference type="STRING" id="224308.BSU08425"/>
<dbReference type="CARD" id="ARO:3003324">
    <property type="molecule name" value="Bsub_mprF"/>
    <property type="mechanism identifier" value="ARO:0001001"/>
    <property type="mechanism name" value="antibiotic target alteration"/>
</dbReference>
<dbReference type="PaxDb" id="224308-BSU08425"/>
<dbReference type="EnsemblBacteria" id="CAX52582">
    <property type="protein sequence ID" value="CAX52582"/>
    <property type="gene ID" value="BSU_08425"/>
</dbReference>
<dbReference type="GeneID" id="8303094"/>
<dbReference type="KEGG" id="bsu:BSU08425"/>
<dbReference type="PATRIC" id="fig|224308.179.peg.910"/>
<dbReference type="eggNOG" id="COG0392">
    <property type="taxonomic scope" value="Bacteria"/>
</dbReference>
<dbReference type="eggNOG" id="COG2898">
    <property type="taxonomic scope" value="Bacteria"/>
</dbReference>
<dbReference type="InParanoid" id="C0H3X7"/>
<dbReference type="OrthoDB" id="145485at2"/>
<dbReference type="PhylomeDB" id="C0H3X7"/>
<dbReference type="BioCyc" id="BSUB:BSU08425-MONOMER"/>
<dbReference type="BRENDA" id="2.3.2.3">
    <property type="organism ID" value="658"/>
</dbReference>
<dbReference type="Proteomes" id="UP000001570">
    <property type="component" value="Chromosome"/>
</dbReference>
<dbReference type="GO" id="GO:0005886">
    <property type="term" value="C:plasma membrane"/>
    <property type="evidence" value="ECO:0007669"/>
    <property type="project" value="UniProtKB-SubCell"/>
</dbReference>
<dbReference type="GO" id="GO:0016755">
    <property type="term" value="F:aminoacyltransferase activity"/>
    <property type="evidence" value="ECO:0000318"/>
    <property type="project" value="GO_Central"/>
</dbReference>
<dbReference type="GO" id="GO:0050071">
    <property type="term" value="F:phosphatidylglycerol lysyltransferase activity"/>
    <property type="evidence" value="ECO:0007669"/>
    <property type="project" value="UniProtKB-EC"/>
</dbReference>
<dbReference type="GO" id="GO:0006629">
    <property type="term" value="P:lipid metabolic process"/>
    <property type="evidence" value="ECO:0007669"/>
    <property type="project" value="UniProtKB-KW"/>
</dbReference>
<dbReference type="GO" id="GO:0055091">
    <property type="term" value="P:phospholipid homeostasis"/>
    <property type="evidence" value="ECO:0000318"/>
    <property type="project" value="GO_Central"/>
</dbReference>
<dbReference type="GO" id="GO:0046677">
    <property type="term" value="P:response to antibiotic"/>
    <property type="evidence" value="ECO:0007669"/>
    <property type="project" value="UniProtKB-KW"/>
</dbReference>
<dbReference type="InterPro" id="IPR016181">
    <property type="entry name" value="Acyl_CoA_acyltransferase"/>
</dbReference>
<dbReference type="InterPro" id="IPR022791">
    <property type="entry name" value="L-PG_synthase/AglD"/>
</dbReference>
<dbReference type="InterPro" id="IPR024320">
    <property type="entry name" value="LPG_synthase_C"/>
</dbReference>
<dbReference type="InterPro" id="IPR051211">
    <property type="entry name" value="PG_lysyltransferase"/>
</dbReference>
<dbReference type="NCBIfam" id="NF033480">
    <property type="entry name" value="bifunc_MprF"/>
    <property type="match status" value="1"/>
</dbReference>
<dbReference type="PANTHER" id="PTHR34697">
    <property type="entry name" value="PHOSPHATIDYLGLYCEROL LYSYLTRANSFERASE"/>
    <property type="match status" value="1"/>
</dbReference>
<dbReference type="PANTHER" id="PTHR34697:SF2">
    <property type="entry name" value="PHOSPHATIDYLGLYCEROL LYSYLTRANSFERASE"/>
    <property type="match status" value="1"/>
</dbReference>
<dbReference type="Pfam" id="PF09924">
    <property type="entry name" value="LPG_synthase_C"/>
    <property type="match status" value="1"/>
</dbReference>
<dbReference type="Pfam" id="PF03706">
    <property type="entry name" value="LPG_synthase_TM"/>
    <property type="match status" value="1"/>
</dbReference>
<dbReference type="SUPFAM" id="SSF55729">
    <property type="entry name" value="Acyl-CoA N-acyltransferases (Nat)"/>
    <property type="match status" value="1"/>
</dbReference>
<proteinExistence type="evidence at protein level"/>
<keyword id="KW-0046">Antibiotic resistance</keyword>
<keyword id="KW-1003">Cell membrane</keyword>
<keyword id="KW-0443">Lipid metabolism</keyword>
<keyword id="KW-0472">Membrane</keyword>
<keyword id="KW-1185">Reference proteome</keyword>
<keyword id="KW-0808">Transferase</keyword>
<keyword id="KW-0812">Transmembrane</keyword>
<keyword id="KW-1133">Transmembrane helix</keyword>
<accession>C0H3X7</accession>
<accession>O31565</accession>
<accession>O52961</accession>
<accession>Q79EW4</accession>
<reference key="1">
    <citation type="journal article" date="1996" name="DNA Res.">
        <title>Cloning and sequencing of a 27.8-kb nucleotide sequence of the 79 degrees-81 degrees region of the Bacillus subtilis genome containing the sspE locus.</title>
        <authorList>
            <person name="Yamamoto H."/>
            <person name="Uchiyama S."/>
            <person name="Sekiguchi J."/>
        </authorList>
    </citation>
    <scope>NUCLEOTIDE SEQUENCE [GENOMIC DNA]</scope>
</reference>
<reference key="2">
    <citation type="journal article" date="1997" name="Nature">
        <title>The complete genome sequence of the Gram-positive bacterium Bacillus subtilis.</title>
        <authorList>
            <person name="Kunst F."/>
            <person name="Ogasawara N."/>
            <person name="Moszer I."/>
            <person name="Albertini A.M."/>
            <person name="Alloni G."/>
            <person name="Azevedo V."/>
            <person name="Bertero M.G."/>
            <person name="Bessieres P."/>
            <person name="Bolotin A."/>
            <person name="Borchert S."/>
            <person name="Borriss R."/>
            <person name="Boursier L."/>
            <person name="Brans A."/>
            <person name="Braun M."/>
            <person name="Brignell S.C."/>
            <person name="Bron S."/>
            <person name="Brouillet S."/>
            <person name="Bruschi C.V."/>
            <person name="Caldwell B."/>
            <person name="Capuano V."/>
            <person name="Carter N.M."/>
            <person name="Choi S.-K."/>
            <person name="Codani J.-J."/>
            <person name="Connerton I.F."/>
            <person name="Cummings N.J."/>
            <person name="Daniel R.A."/>
            <person name="Denizot F."/>
            <person name="Devine K.M."/>
            <person name="Duesterhoeft A."/>
            <person name="Ehrlich S.D."/>
            <person name="Emmerson P.T."/>
            <person name="Entian K.-D."/>
            <person name="Errington J."/>
            <person name="Fabret C."/>
            <person name="Ferrari E."/>
            <person name="Foulger D."/>
            <person name="Fritz C."/>
            <person name="Fujita M."/>
            <person name="Fujita Y."/>
            <person name="Fuma S."/>
            <person name="Galizzi A."/>
            <person name="Galleron N."/>
            <person name="Ghim S.-Y."/>
            <person name="Glaser P."/>
            <person name="Goffeau A."/>
            <person name="Golightly E.J."/>
            <person name="Grandi G."/>
            <person name="Guiseppi G."/>
            <person name="Guy B.J."/>
            <person name="Haga K."/>
            <person name="Haiech J."/>
            <person name="Harwood C.R."/>
            <person name="Henaut A."/>
            <person name="Hilbert H."/>
            <person name="Holsappel S."/>
            <person name="Hosono S."/>
            <person name="Hullo M.-F."/>
            <person name="Itaya M."/>
            <person name="Jones L.-M."/>
            <person name="Joris B."/>
            <person name="Karamata D."/>
            <person name="Kasahara Y."/>
            <person name="Klaerr-Blanchard M."/>
            <person name="Klein C."/>
            <person name="Kobayashi Y."/>
            <person name="Koetter P."/>
            <person name="Koningstein G."/>
            <person name="Krogh S."/>
            <person name="Kumano M."/>
            <person name="Kurita K."/>
            <person name="Lapidus A."/>
            <person name="Lardinois S."/>
            <person name="Lauber J."/>
            <person name="Lazarevic V."/>
            <person name="Lee S.-M."/>
            <person name="Levine A."/>
            <person name="Liu H."/>
            <person name="Masuda S."/>
            <person name="Mauel C."/>
            <person name="Medigue C."/>
            <person name="Medina N."/>
            <person name="Mellado R.P."/>
            <person name="Mizuno M."/>
            <person name="Moestl D."/>
            <person name="Nakai S."/>
            <person name="Noback M."/>
            <person name="Noone D."/>
            <person name="O'Reilly M."/>
            <person name="Ogawa K."/>
            <person name="Ogiwara A."/>
            <person name="Oudega B."/>
            <person name="Park S.-H."/>
            <person name="Parro V."/>
            <person name="Pohl T.M."/>
            <person name="Portetelle D."/>
            <person name="Porwollik S."/>
            <person name="Prescott A.M."/>
            <person name="Presecan E."/>
            <person name="Pujic P."/>
            <person name="Purnelle B."/>
            <person name="Rapoport G."/>
            <person name="Rey M."/>
            <person name="Reynolds S."/>
            <person name="Rieger M."/>
            <person name="Rivolta C."/>
            <person name="Rocha E."/>
            <person name="Roche B."/>
            <person name="Rose M."/>
            <person name="Sadaie Y."/>
            <person name="Sato T."/>
            <person name="Scanlan E."/>
            <person name="Schleich S."/>
            <person name="Schroeter R."/>
            <person name="Scoffone F."/>
            <person name="Sekiguchi J."/>
            <person name="Sekowska A."/>
            <person name="Seror S.J."/>
            <person name="Serror P."/>
            <person name="Shin B.-S."/>
            <person name="Soldo B."/>
            <person name="Sorokin A."/>
            <person name="Tacconi E."/>
            <person name="Takagi T."/>
            <person name="Takahashi H."/>
            <person name="Takemaru K."/>
            <person name="Takeuchi M."/>
            <person name="Tamakoshi A."/>
            <person name="Tanaka T."/>
            <person name="Terpstra P."/>
            <person name="Tognoni A."/>
            <person name="Tosato V."/>
            <person name="Uchiyama S."/>
            <person name="Vandenbol M."/>
            <person name="Vannier F."/>
            <person name="Vassarotti A."/>
            <person name="Viari A."/>
            <person name="Wambutt R."/>
            <person name="Wedler E."/>
            <person name="Wedler H."/>
            <person name="Weitzenegger T."/>
            <person name="Winters P."/>
            <person name="Wipat A."/>
            <person name="Yamamoto H."/>
            <person name="Yamane K."/>
            <person name="Yasumoto K."/>
            <person name="Yata K."/>
            <person name="Yoshida K."/>
            <person name="Yoshikawa H.-F."/>
            <person name="Zumstein E."/>
            <person name="Yoshikawa H."/>
            <person name="Danchin A."/>
        </authorList>
    </citation>
    <scope>NUCLEOTIDE SEQUENCE [LARGE SCALE GENOMIC DNA]</scope>
    <source>
        <strain>168</strain>
    </source>
</reference>
<reference key="3">
    <citation type="journal article" date="2002" name="Microbiology">
        <title>MprF-mediated lysinylation of phospholipids in Bacillus subtilis - protection against bacteriocins in terrestrial habitats?</title>
        <authorList>
            <person name="Staubitz P."/>
            <person name="Peschel A."/>
        </authorList>
    </citation>
    <scope>PARTIAL NUCLEOTIDE SEQUENCE [GENOMIC DNA]</scope>
    <source>
        <strain>168 / Marburg / ATCC 6051 / DSM 10 / JCM 1465 / NBRC 13719 / NCIMB 3610 / NRRL NRS-744 / VKM B-501</strain>
    </source>
</reference>
<reference key="4">
    <citation type="journal article" date="2005" name="J. Bacteriol.">
        <title>Phosphatidylethanolamine domains and localization of phospholipid synthases in Bacillus subtilis membranes.</title>
        <authorList>
            <person name="Nishibori A."/>
            <person name="Kusaka J."/>
            <person name="Hara H."/>
            <person name="Umeda M."/>
            <person name="Matsumoto K."/>
        </authorList>
    </citation>
    <scope>SUBCELLULAR LOCATION</scope>
</reference>
<reference key="5">
    <citation type="journal article" date="2008" name="J. Bacteriol.">
        <title>Phenotypic and transcriptomic characterization of Bacillus subtilis mutants with grossly altered membrane composition.</title>
        <authorList>
            <person name="Salzberg L.I."/>
            <person name="Helmann J.D."/>
        </authorList>
    </citation>
    <scope>FUNCTION IN LPG SYNTHESIS</scope>
    <scope>DISRUPTION PHENOTYPE</scope>
    <source>
        <strain>168 / CU1065</strain>
    </source>
</reference>
<reference key="6">
    <citation type="journal article" date="2009" name="Antimicrob. Agents Chemother.">
        <title>Genetic analysis of factors affecting susceptibility of Bacillus subtilis to daptomycin.</title>
        <authorList>
            <person name="Hachmann A.-B."/>
            <person name="Angert E.R."/>
            <person name="Helmann J.D."/>
        </authorList>
    </citation>
    <scope>DISRUPTION PHENOTYPE</scope>
    <source>
        <strain>168 / CU1065</strain>
    </source>
</reference>
<reference key="7">
    <citation type="journal article" date="2016" name="PLoS Genet.">
        <title>Super Resolution Fluorescence Microscopy and Tracking of Bacterial Flotillin (Reggie) Paralogs Provide Evidence for Defined-Sized Protein Microdomains within the Bacterial Membrane but Absence of Clusters Containing Detergent-Resistant Proteins.</title>
        <authorList>
            <person name="Dempwolff F."/>
            <person name="Schmidt F.K."/>
            <person name="Hervas A.B."/>
            <person name="Stroh A."/>
            <person name="Roesch T.C."/>
            <person name="Riese C.N."/>
            <person name="Dersch S."/>
            <person name="Heimerl T."/>
            <person name="Lucena D."/>
            <person name="Huelsbusch N."/>
            <person name="Stuermer C.A."/>
            <person name="Takeshita N."/>
            <person name="Fischer R."/>
            <person name="Eckhardt B."/>
            <person name="Graumann P.L."/>
        </authorList>
    </citation>
    <scope>DISRUPTION PHENOTYPE</scope>
    <source>
        <strain>168</strain>
    </source>
</reference>
<name>MPRF_BACSU</name>
<feature type="chain" id="PRO_0000390919" description="Phosphatidylglycerol lysyltransferase">
    <location>
        <begin position="1"/>
        <end position="856"/>
    </location>
</feature>
<feature type="transmembrane region" description="Helical" evidence="1">
    <location>
        <begin position="7"/>
        <end position="27"/>
    </location>
</feature>
<feature type="transmembrane region" description="Helical" evidence="1">
    <location>
        <begin position="51"/>
        <end position="71"/>
    </location>
</feature>
<feature type="transmembrane region" description="Helical" evidence="1">
    <location>
        <begin position="88"/>
        <end position="108"/>
    </location>
</feature>
<feature type="transmembrane region" description="Helical" evidence="1">
    <location>
        <begin position="128"/>
        <end position="148"/>
    </location>
</feature>
<feature type="transmembrane region" description="Helical" evidence="1">
    <location>
        <begin position="161"/>
        <end position="181"/>
    </location>
</feature>
<feature type="transmembrane region" description="Helical" evidence="1">
    <location>
        <begin position="208"/>
        <end position="228"/>
    </location>
</feature>
<feature type="transmembrane region" description="Helical" evidence="1">
    <location>
        <begin position="235"/>
        <end position="255"/>
    </location>
</feature>
<feature type="transmembrane region" description="Helical" evidence="1">
    <location>
        <begin position="280"/>
        <end position="300"/>
    </location>
</feature>
<feature type="transmembrane region" description="Helical" evidence="1">
    <location>
        <begin position="342"/>
        <end position="362"/>
    </location>
</feature>
<feature type="transmembrane region" description="Helical" evidence="1">
    <location>
        <begin position="375"/>
        <end position="395"/>
    </location>
</feature>
<feature type="transmembrane region" description="Helical" evidence="1">
    <location>
        <begin position="420"/>
        <end position="440"/>
    </location>
</feature>
<feature type="transmembrane region" description="Helical" evidence="1">
    <location>
        <begin position="459"/>
        <end position="479"/>
    </location>
</feature>
<feature type="transmembrane region" description="Helical" evidence="1">
    <location>
        <begin position="501"/>
        <end position="521"/>
    </location>
</feature>